<organism>
    <name type="scientific">Mus musculus</name>
    <name type="common">Mouse</name>
    <dbReference type="NCBI Taxonomy" id="10090"/>
    <lineage>
        <taxon>Eukaryota</taxon>
        <taxon>Metazoa</taxon>
        <taxon>Chordata</taxon>
        <taxon>Craniata</taxon>
        <taxon>Vertebrata</taxon>
        <taxon>Euteleostomi</taxon>
        <taxon>Mammalia</taxon>
        <taxon>Eutheria</taxon>
        <taxon>Euarchontoglires</taxon>
        <taxon>Glires</taxon>
        <taxon>Rodentia</taxon>
        <taxon>Myomorpha</taxon>
        <taxon>Muroidea</taxon>
        <taxon>Muridae</taxon>
        <taxon>Murinae</taxon>
        <taxon>Mus</taxon>
        <taxon>Mus</taxon>
    </lineage>
</organism>
<dbReference type="EMBL" id="AF170920">
    <property type="protein sequence ID" value="AAF27311.1"/>
    <property type="status" value="ALT_SEQ"/>
    <property type="molecule type" value="mRNA"/>
</dbReference>
<dbReference type="EMBL" id="AK003206">
    <property type="protein sequence ID" value="BAB22642.2"/>
    <property type="molecule type" value="mRNA"/>
</dbReference>
<dbReference type="EMBL" id="AK006674">
    <property type="protein sequence ID" value="BAB24699.2"/>
    <property type="molecule type" value="mRNA"/>
</dbReference>
<dbReference type="EMBL" id="AK007523">
    <property type="protein sequence ID" value="BAB25088.2"/>
    <property type="molecule type" value="mRNA"/>
</dbReference>
<dbReference type="EMBL" id="AK008419">
    <property type="protein sequence ID" value="BAB25657.2"/>
    <property type="molecule type" value="mRNA"/>
</dbReference>
<dbReference type="EMBL" id="BC038049">
    <property type="protein sequence ID" value="AAH38049.3"/>
    <property type="molecule type" value="mRNA"/>
</dbReference>
<dbReference type="EMBL" id="BC096044">
    <property type="protein sequence ID" value="AAH96044.1"/>
    <property type="molecule type" value="mRNA"/>
</dbReference>
<dbReference type="EMBL" id="BC096677">
    <property type="protein sequence ID" value="AAH96677.2"/>
    <property type="molecule type" value="mRNA"/>
</dbReference>
<dbReference type="CCDS" id="CCDS36844.1"/>
<dbReference type="RefSeq" id="NP_064363.2">
    <property type="nucleotide sequence ID" value="NM_019979.2"/>
</dbReference>
<dbReference type="BioGRID" id="219813">
    <property type="interactions" value="1"/>
</dbReference>
<dbReference type="FunCoup" id="Q9JLJ1">
    <property type="interactions" value="909"/>
</dbReference>
<dbReference type="STRING" id="10090.ENSMUSP00000107887"/>
<dbReference type="iPTMnet" id="Q9JLJ1"/>
<dbReference type="PhosphoSitePlus" id="Q9JLJ1"/>
<dbReference type="SwissPalm" id="Q9JLJ1"/>
<dbReference type="PaxDb" id="10090-ENSMUSP00000107887"/>
<dbReference type="PeptideAtlas" id="Q9JLJ1"/>
<dbReference type="ProteomicsDB" id="256769"/>
<dbReference type="Pumba" id="Q9JLJ1"/>
<dbReference type="Antibodypedia" id="1553">
    <property type="antibodies" value="86 antibodies from 22 providers"/>
</dbReference>
<dbReference type="DNASU" id="80795"/>
<dbReference type="Ensembl" id="ENSMUST00000112268.4">
    <property type="protein sequence ID" value="ENSMUSP00000107887.3"/>
    <property type="gene ID" value="ENSMUSG00000042682.11"/>
</dbReference>
<dbReference type="GeneID" id="80795"/>
<dbReference type="KEGG" id="mmu:80795"/>
<dbReference type="UCSC" id="uc007sul.1">
    <property type="organism name" value="mouse"/>
</dbReference>
<dbReference type="AGR" id="MGI:1931466"/>
<dbReference type="CTD" id="58515"/>
<dbReference type="MGI" id="MGI:1931466">
    <property type="gene designation" value="Selenok"/>
</dbReference>
<dbReference type="VEuPathDB" id="HostDB:ENSMUSG00000042682"/>
<dbReference type="eggNOG" id="ENOG502S3PW">
    <property type="taxonomic scope" value="Eukaryota"/>
</dbReference>
<dbReference type="GeneTree" id="ENSGT00390000016119"/>
<dbReference type="HOGENOM" id="CLU_182590_0_1_1"/>
<dbReference type="InParanoid" id="Q9JLJ1"/>
<dbReference type="OMA" id="MAGGXGR"/>
<dbReference type="OrthoDB" id="167295at2759"/>
<dbReference type="PhylomeDB" id="Q9JLJ1"/>
<dbReference type="TreeFam" id="TF328380"/>
<dbReference type="BioGRID-ORCS" id="80795">
    <property type="hits" value="9 hits in 46 CRISPR screens"/>
</dbReference>
<dbReference type="ChiTaRS" id="Selk">
    <property type="organism name" value="mouse"/>
</dbReference>
<dbReference type="PRO" id="PR:Q9JLJ1"/>
<dbReference type="Proteomes" id="UP000000589">
    <property type="component" value="Chromosome 14"/>
</dbReference>
<dbReference type="RNAct" id="Q9JLJ1">
    <property type="molecule type" value="protein"/>
</dbReference>
<dbReference type="Bgee" id="ENSMUSG00000042682">
    <property type="expression patterns" value="Expressed in embryonic brain and 252 other cell types or tissues"/>
</dbReference>
<dbReference type="ExpressionAtlas" id="Q9JLJ1">
    <property type="expression patterns" value="baseline and differential"/>
</dbReference>
<dbReference type="GO" id="GO:0005789">
    <property type="term" value="C:endoplasmic reticulum membrane"/>
    <property type="evidence" value="ECO:0000314"/>
    <property type="project" value="MGI"/>
</dbReference>
<dbReference type="GO" id="GO:0005886">
    <property type="term" value="C:plasma membrane"/>
    <property type="evidence" value="ECO:0007669"/>
    <property type="project" value="UniProtKB-SubCell"/>
</dbReference>
<dbReference type="GO" id="GO:0042802">
    <property type="term" value="F:identical protein binding"/>
    <property type="evidence" value="ECO:0007669"/>
    <property type="project" value="Ensembl"/>
</dbReference>
<dbReference type="GO" id="GO:0006816">
    <property type="term" value="P:calcium ion transport"/>
    <property type="evidence" value="ECO:0000315"/>
    <property type="project" value="MGI"/>
</dbReference>
<dbReference type="GO" id="GO:0051649">
    <property type="term" value="P:establishment of localization in cell"/>
    <property type="evidence" value="ECO:0000315"/>
    <property type="project" value="MGI"/>
</dbReference>
<dbReference type="GO" id="GO:0070059">
    <property type="term" value="P:intrinsic apoptotic signaling pathway in response to endoplasmic reticulum stress"/>
    <property type="evidence" value="ECO:0007669"/>
    <property type="project" value="Ensembl"/>
</dbReference>
<dbReference type="GO" id="GO:0010742">
    <property type="term" value="P:macrophage derived foam cell differentiation"/>
    <property type="evidence" value="ECO:0000315"/>
    <property type="project" value="MGI"/>
</dbReference>
<dbReference type="GO" id="GO:1990266">
    <property type="term" value="P:neutrophil migration"/>
    <property type="evidence" value="ECO:0000315"/>
    <property type="project" value="MGI"/>
</dbReference>
<dbReference type="GO" id="GO:0032722">
    <property type="term" value="P:positive regulation of chemokine production"/>
    <property type="evidence" value="ECO:0000315"/>
    <property type="project" value="UniProtKB"/>
</dbReference>
<dbReference type="GO" id="GO:0002230">
    <property type="term" value="P:positive regulation of defense response to virus by host"/>
    <property type="evidence" value="ECO:0000315"/>
    <property type="project" value="UniProtKB"/>
</dbReference>
<dbReference type="GO" id="GO:0032755">
    <property type="term" value="P:positive regulation of interleukin-6 production"/>
    <property type="evidence" value="ECO:0000315"/>
    <property type="project" value="UniProtKB"/>
</dbReference>
<dbReference type="GO" id="GO:0071639">
    <property type="term" value="P:positive regulation of monocyte chemotactic protein-1 production"/>
    <property type="evidence" value="ECO:0000315"/>
    <property type="project" value="UniProtKB"/>
</dbReference>
<dbReference type="GO" id="GO:1902624">
    <property type="term" value="P:positive regulation of neutrophil migration"/>
    <property type="evidence" value="ECO:0000315"/>
    <property type="project" value="MGI"/>
</dbReference>
<dbReference type="GO" id="GO:2000406">
    <property type="term" value="P:positive regulation of T cell migration"/>
    <property type="evidence" value="ECO:0000315"/>
    <property type="project" value="MGI"/>
</dbReference>
<dbReference type="GO" id="GO:0042102">
    <property type="term" value="P:positive regulation of T cell proliferation"/>
    <property type="evidence" value="ECO:0000315"/>
    <property type="project" value="MGI"/>
</dbReference>
<dbReference type="GO" id="GO:0032760">
    <property type="term" value="P:positive regulation of tumor necrosis factor production"/>
    <property type="evidence" value="ECO:0000315"/>
    <property type="project" value="UniProtKB"/>
</dbReference>
<dbReference type="GO" id="GO:0018345">
    <property type="term" value="P:protein palmitoylation"/>
    <property type="evidence" value="ECO:0000314"/>
    <property type="project" value="UniProtKB"/>
</dbReference>
<dbReference type="GO" id="GO:0050848">
    <property type="term" value="P:regulation of calcium-mediated signaling"/>
    <property type="evidence" value="ECO:0000315"/>
    <property type="project" value="UniProtKB"/>
</dbReference>
<dbReference type="GO" id="GO:0051223">
    <property type="term" value="P:regulation of protein transport"/>
    <property type="evidence" value="ECO:0000315"/>
    <property type="project" value="MGI"/>
</dbReference>
<dbReference type="GO" id="GO:0045728">
    <property type="term" value="P:respiratory burst after phagocytosis"/>
    <property type="evidence" value="ECO:0000315"/>
    <property type="project" value="MGI"/>
</dbReference>
<dbReference type="GO" id="GO:0006979">
    <property type="term" value="P:response to oxidative stress"/>
    <property type="evidence" value="ECO:0007669"/>
    <property type="project" value="Ensembl"/>
</dbReference>
<dbReference type="GO" id="GO:0072678">
    <property type="term" value="P:T cell migration"/>
    <property type="evidence" value="ECO:0000315"/>
    <property type="project" value="MGI"/>
</dbReference>
<dbReference type="GO" id="GO:0042098">
    <property type="term" value="P:T cell proliferation"/>
    <property type="evidence" value="ECO:0000315"/>
    <property type="project" value="MGI"/>
</dbReference>
<dbReference type="InterPro" id="IPR024491">
    <property type="entry name" value="Se_SelK/SelG"/>
</dbReference>
<dbReference type="PANTHER" id="PTHR16875">
    <property type="entry name" value="SELENOPROTEIN K"/>
    <property type="match status" value="1"/>
</dbReference>
<dbReference type="PANTHER" id="PTHR16875:SF0">
    <property type="entry name" value="SELENOPROTEIN K"/>
    <property type="match status" value="1"/>
</dbReference>
<dbReference type="Pfam" id="PF10961">
    <property type="entry name" value="SelK_SelG"/>
    <property type="match status" value="1"/>
</dbReference>
<accession>Q9JLJ1</accession>
<accession>Q8CI00</accession>
<proteinExistence type="evidence at protein level"/>
<sequence length="94" mass="10642">MVYISNGQVLDSRNQSPWRVSFLTDFFWGIAEFVVFFFKTLLQQDVKKRRGYGSSSDSRYDDGRGPPGNPPRRMGRISHLRGPSPPPMAGGUGR</sequence>
<feature type="chain" id="PRO_0000097670" description="Selenoprotein K">
    <location>
        <begin position="1"/>
        <end position="94"/>
    </location>
</feature>
<feature type="transmembrane region" description="Helical" evidence="3">
    <location>
        <begin position="20"/>
        <end position="42"/>
    </location>
</feature>
<feature type="region of interest" description="Disordered" evidence="4">
    <location>
        <begin position="46"/>
        <end position="94"/>
    </location>
</feature>
<feature type="site" description="Cleavage; by CAPN2">
    <location>
        <begin position="81"/>
        <end position="82"/>
    </location>
</feature>
<feature type="non-standard amino acid" description="Selenocysteine" evidence="1">
    <location>
        <position position="92"/>
    </location>
</feature>
<protein>
    <recommendedName>
        <fullName evidence="10">Selenoprotein K</fullName>
        <shortName evidence="10">SelK</shortName>
    </recommendedName>
</protein>
<name>SELK_MOUSE</name>
<keyword id="KW-0106">Calcium</keyword>
<keyword id="KW-0109">Calcium transport</keyword>
<keyword id="KW-1003">Cell membrane</keyword>
<keyword id="KW-0256">Endoplasmic reticulum</keyword>
<keyword id="KW-0406">Ion transport</keyword>
<keyword id="KW-0472">Membrane</keyword>
<keyword id="KW-1185">Reference proteome</keyword>
<keyword id="KW-0712">Selenocysteine</keyword>
<keyword id="KW-0812">Transmembrane</keyword>
<keyword id="KW-1133">Transmembrane helix</keyword>
<keyword id="KW-0813">Transport</keyword>
<keyword id="KW-0832">Ubl conjugation</keyword>
<gene>
    <name evidence="12" type="primary">Selenok</name>
    <name evidence="10" type="synonym">Selk</name>
</gene>
<evidence type="ECO:0000250" key="1"/>
<evidence type="ECO:0000250" key="2">
    <source>
        <dbReference type="UniProtKB" id="Q9Y6D0"/>
    </source>
</evidence>
<evidence type="ECO:0000255" key="3"/>
<evidence type="ECO:0000256" key="4">
    <source>
        <dbReference type="SAM" id="MobiDB-lite"/>
    </source>
</evidence>
<evidence type="ECO:0000269" key="5">
    <source>
    </source>
</evidence>
<evidence type="ECO:0000269" key="6">
    <source>
    </source>
</evidence>
<evidence type="ECO:0000269" key="7">
    <source>
    </source>
</evidence>
<evidence type="ECO:0000269" key="8">
    <source>
    </source>
</evidence>
<evidence type="ECO:0000269" key="9">
    <source>
    </source>
</evidence>
<evidence type="ECO:0000303" key="10">
    <source>
    </source>
</evidence>
<evidence type="ECO:0000305" key="11"/>
<evidence type="ECO:0000312" key="12">
    <source>
        <dbReference type="MGI" id="MGI:1931466"/>
    </source>
</evidence>
<comment type="function">
    <text evidence="2 5 8 9">Required for Ca(2+) flux in immune cells and plays a role in T-cell proliferation and in T-cell and neutrophil migration (PubMed:21220695). Involved in endoplasmic reticulum-associated degradation (ERAD) of soluble glycosylated proteins (By similarity). Required for palmitoylation and cell surface expression of CD36 and involved in macrophage uptake of low-density lipoprotein and in foam cell formation (PubMed:23444136). Together with ZDHHC6, required for palmitoylation of ITPR1 in immune cells, leading to regulate ITPR1 stability and function (PubMed:25368151). Plays a role in protection of cells from ER stress-induced apoptosis (By similarity). Protects cells from oxidative stress when overexpressed in cardiomyocytes (By similarity).</text>
</comment>
<comment type="subunit">
    <text evidence="2 7">Interacts with DERL1, DERL2, DERL3 and SELENOS (PubMed:22016385). The SELENOK-SELENOS complex interacts with VCP (By similarity). Interacts with ZDHHC6 (PubMed:25368151).</text>
</comment>
<comment type="subcellular location">
    <subcellularLocation>
        <location evidence="5">Endoplasmic reticulum membrane</location>
        <topology evidence="3">Single-pass membrane protein</topology>
    </subcellularLocation>
    <subcellularLocation>
        <location evidence="2">Cell membrane</location>
        <topology evidence="3">Single-pass membrane protein</topology>
    </subcellularLocation>
    <text evidence="5">Probably mainly localized in the ER.</text>
</comment>
<comment type="tissue specificity">
    <text evidence="5 6">High expression in spleen and intestine (at protein level). Expressed in a range of immune cells including T and B-cells and also in myeloid cells including macrophages, neutrophils and dendritic cells (at protein level).</text>
</comment>
<comment type="induction">
    <text evidence="5">By increased dietary selenium. Expression is significantly decreased by a low selenium diet.</text>
</comment>
<comment type="PTM">
    <text evidence="6">Cleaved by CAPN2/m-calpain in resting macrophages but not in activated macrophages. Macrophage activation up-regulates expression of the calpain inhibitor CAST/calpastatin, resulting in inhibition of CAPN2 activity.</text>
</comment>
<comment type="PTM">
    <text evidence="2">Truncated SELENOK proteins produced by failed UGA/Sec decoding are ubiquitinated by the CRL2(KLHDC2) complex, which recognizes the diglycine (Gly-Gly) at the C-terminus of truncated SELENOK proteins.</text>
</comment>
<comment type="disruption phenotype">
    <text evidence="5 8">Normal growth, fertility and immune system development. Reduced receptor-mediated Ca(2+) flux in T-cells, neutrophils and macrophages. Reduced T-cell proliferation and reduced T-cell and neutrophil migration. Decreased viral clearance and increased mortality following infection with West Nile virus. Bone marrow-derived macrophages from knockout mice display decreased uptake of acetylated or oxidized low-density lipoprotein, reduced foam cell formation and decreased palmitoylation and cell surface expression of CD36.</text>
</comment>
<comment type="similarity">
    <text evidence="11">Belongs to the selenoprotein K family.</text>
</comment>
<comment type="sequence caution" evidence="11">
    <conflict type="erroneous termination">
        <sequence resource="EMBL-CDS" id="AAF27311"/>
    </conflict>
    <text>Truncated C-terminus.</text>
</comment>
<reference key="1">
    <citation type="submission" date="1999-07" db="EMBL/GenBank/DDBJ databases">
        <authorList>
            <person name="Xie L.P."/>
            <person name="Chen W.F."/>
        </authorList>
    </citation>
    <scope>NUCLEOTIDE SEQUENCE [MRNA]</scope>
    <source>
        <strain>BALB/cJ</strain>
        <tissue>Thymic epithelium</tissue>
    </source>
</reference>
<reference key="2">
    <citation type="journal article" date="2005" name="Science">
        <title>The transcriptional landscape of the mammalian genome.</title>
        <authorList>
            <person name="Carninci P."/>
            <person name="Kasukawa T."/>
            <person name="Katayama S."/>
            <person name="Gough J."/>
            <person name="Frith M.C."/>
            <person name="Maeda N."/>
            <person name="Oyama R."/>
            <person name="Ravasi T."/>
            <person name="Lenhard B."/>
            <person name="Wells C."/>
            <person name="Kodzius R."/>
            <person name="Shimokawa K."/>
            <person name="Bajic V.B."/>
            <person name="Brenner S.E."/>
            <person name="Batalov S."/>
            <person name="Forrest A.R."/>
            <person name="Zavolan M."/>
            <person name="Davis M.J."/>
            <person name="Wilming L.G."/>
            <person name="Aidinis V."/>
            <person name="Allen J.E."/>
            <person name="Ambesi-Impiombato A."/>
            <person name="Apweiler R."/>
            <person name="Aturaliya R.N."/>
            <person name="Bailey T.L."/>
            <person name="Bansal M."/>
            <person name="Baxter L."/>
            <person name="Beisel K.W."/>
            <person name="Bersano T."/>
            <person name="Bono H."/>
            <person name="Chalk A.M."/>
            <person name="Chiu K.P."/>
            <person name="Choudhary V."/>
            <person name="Christoffels A."/>
            <person name="Clutterbuck D.R."/>
            <person name="Crowe M.L."/>
            <person name="Dalla E."/>
            <person name="Dalrymple B.P."/>
            <person name="de Bono B."/>
            <person name="Della Gatta G."/>
            <person name="di Bernardo D."/>
            <person name="Down T."/>
            <person name="Engstrom P."/>
            <person name="Fagiolini M."/>
            <person name="Faulkner G."/>
            <person name="Fletcher C.F."/>
            <person name="Fukushima T."/>
            <person name="Furuno M."/>
            <person name="Futaki S."/>
            <person name="Gariboldi M."/>
            <person name="Georgii-Hemming P."/>
            <person name="Gingeras T.R."/>
            <person name="Gojobori T."/>
            <person name="Green R.E."/>
            <person name="Gustincich S."/>
            <person name="Harbers M."/>
            <person name="Hayashi Y."/>
            <person name="Hensch T.K."/>
            <person name="Hirokawa N."/>
            <person name="Hill D."/>
            <person name="Huminiecki L."/>
            <person name="Iacono M."/>
            <person name="Ikeo K."/>
            <person name="Iwama A."/>
            <person name="Ishikawa T."/>
            <person name="Jakt M."/>
            <person name="Kanapin A."/>
            <person name="Katoh M."/>
            <person name="Kawasawa Y."/>
            <person name="Kelso J."/>
            <person name="Kitamura H."/>
            <person name="Kitano H."/>
            <person name="Kollias G."/>
            <person name="Krishnan S.P."/>
            <person name="Kruger A."/>
            <person name="Kummerfeld S.K."/>
            <person name="Kurochkin I.V."/>
            <person name="Lareau L.F."/>
            <person name="Lazarevic D."/>
            <person name="Lipovich L."/>
            <person name="Liu J."/>
            <person name="Liuni S."/>
            <person name="McWilliam S."/>
            <person name="Madan Babu M."/>
            <person name="Madera M."/>
            <person name="Marchionni L."/>
            <person name="Matsuda H."/>
            <person name="Matsuzawa S."/>
            <person name="Miki H."/>
            <person name="Mignone F."/>
            <person name="Miyake S."/>
            <person name="Morris K."/>
            <person name="Mottagui-Tabar S."/>
            <person name="Mulder N."/>
            <person name="Nakano N."/>
            <person name="Nakauchi H."/>
            <person name="Ng P."/>
            <person name="Nilsson R."/>
            <person name="Nishiguchi S."/>
            <person name="Nishikawa S."/>
            <person name="Nori F."/>
            <person name="Ohara O."/>
            <person name="Okazaki Y."/>
            <person name="Orlando V."/>
            <person name="Pang K.C."/>
            <person name="Pavan W.J."/>
            <person name="Pavesi G."/>
            <person name="Pesole G."/>
            <person name="Petrovsky N."/>
            <person name="Piazza S."/>
            <person name="Reed J."/>
            <person name="Reid J.F."/>
            <person name="Ring B.Z."/>
            <person name="Ringwald M."/>
            <person name="Rost B."/>
            <person name="Ruan Y."/>
            <person name="Salzberg S.L."/>
            <person name="Sandelin A."/>
            <person name="Schneider C."/>
            <person name="Schoenbach C."/>
            <person name="Sekiguchi K."/>
            <person name="Semple C.A."/>
            <person name="Seno S."/>
            <person name="Sessa L."/>
            <person name="Sheng Y."/>
            <person name="Shibata Y."/>
            <person name="Shimada H."/>
            <person name="Shimada K."/>
            <person name="Silva D."/>
            <person name="Sinclair B."/>
            <person name="Sperling S."/>
            <person name="Stupka E."/>
            <person name="Sugiura K."/>
            <person name="Sultana R."/>
            <person name="Takenaka Y."/>
            <person name="Taki K."/>
            <person name="Tammoja K."/>
            <person name="Tan S.L."/>
            <person name="Tang S."/>
            <person name="Taylor M.S."/>
            <person name="Tegner J."/>
            <person name="Teichmann S.A."/>
            <person name="Ueda H.R."/>
            <person name="van Nimwegen E."/>
            <person name="Verardo R."/>
            <person name="Wei C.L."/>
            <person name="Yagi K."/>
            <person name="Yamanishi H."/>
            <person name="Zabarovsky E."/>
            <person name="Zhu S."/>
            <person name="Zimmer A."/>
            <person name="Hide W."/>
            <person name="Bult C."/>
            <person name="Grimmond S.M."/>
            <person name="Teasdale R.D."/>
            <person name="Liu E.T."/>
            <person name="Brusic V."/>
            <person name="Quackenbush J."/>
            <person name="Wahlestedt C."/>
            <person name="Mattick J.S."/>
            <person name="Hume D.A."/>
            <person name="Kai C."/>
            <person name="Sasaki D."/>
            <person name="Tomaru Y."/>
            <person name="Fukuda S."/>
            <person name="Kanamori-Katayama M."/>
            <person name="Suzuki M."/>
            <person name="Aoki J."/>
            <person name="Arakawa T."/>
            <person name="Iida J."/>
            <person name="Imamura K."/>
            <person name="Itoh M."/>
            <person name="Kato T."/>
            <person name="Kawaji H."/>
            <person name="Kawagashira N."/>
            <person name="Kawashima T."/>
            <person name="Kojima M."/>
            <person name="Kondo S."/>
            <person name="Konno H."/>
            <person name="Nakano K."/>
            <person name="Ninomiya N."/>
            <person name="Nishio T."/>
            <person name="Okada M."/>
            <person name="Plessy C."/>
            <person name="Shibata K."/>
            <person name="Shiraki T."/>
            <person name="Suzuki S."/>
            <person name="Tagami M."/>
            <person name="Waki K."/>
            <person name="Watahiki A."/>
            <person name="Okamura-Oho Y."/>
            <person name="Suzuki H."/>
            <person name="Kawai J."/>
            <person name="Hayashizaki Y."/>
        </authorList>
    </citation>
    <scope>NUCLEOTIDE SEQUENCE [LARGE SCALE MRNA]</scope>
    <source>
        <strain>C57BL/6J</strain>
        <tissue>Embryo</tissue>
        <tissue>Pancreas</tissue>
        <tissue>Small intestine</tissue>
        <tissue>Testis</tissue>
    </source>
</reference>
<reference key="3">
    <citation type="journal article" date="2004" name="Genome Res.">
        <title>The status, quality, and expansion of the NIH full-length cDNA project: the Mammalian Gene Collection (MGC).</title>
        <authorList>
            <consortium name="The MGC Project Team"/>
        </authorList>
    </citation>
    <scope>NUCLEOTIDE SEQUENCE [LARGE SCALE MRNA]</scope>
    <source>
        <strain>C57BL/6J</strain>
        <strain>Czech II</strain>
        <tissue>Mammary gland</tissue>
        <tissue>Mammary tumor</tissue>
    </source>
</reference>
<reference key="4">
    <citation type="journal article" date="2011" name="J. Biol. Chem.">
        <title>Selenoprotein K is a novel target of m-calpain, and cleavage is regulated by Toll-like receptor-induced calpastatin in macrophages.</title>
        <authorList>
            <person name="Huang Z."/>
            <person name="Hoffmann F.W."/>
            <person name="Norton R.L."/>
            <person name="Hashimoto A.C."/>
            <person name="Hoffmann P.R."/>
        </authorList>
    </citation>
    <scope>TISSUE SPECIFICITY</scope>
    <scope>CLEAVAGE BY CAPN2</scope>
</reference>
<reference key="5">
    <citation type="journal article" date="2011" name="J. Biol. Chem.">
        <title>Selenoprotein K binds multiprotein complexes and is involved in the regulation of endoplasmic reticulum homeostasis.</title>
        <authorList>
            <person name="Shchedrina V.A."/>
            <person name="Everley R.A."/>
            <person name="Zhang Y."/>
            <person name="Gygi S.P."/>
            <person name="Hatfield D.L."/>
            <person name="Gladyshev V.N."/>
        </authorList>
    </citation>
    <scope>INTERACTION WITH DERL1; DERL2 AND DERL3</scope>
</reference>
<reference key="6">
    <citation type="journal article" date="2011" name="J. Immunol.">
        <title>Selenoprotein K knockout mice exhibit deficient calcium flux in immune cells and impaired immune responses.</title>
        <authorList>
            <person name="Verma S."/>
            <person name="Hoffmann F.W."/>
            <person name="Kumar M."/>
            <person name="Huang Z."/>
            <person name="Roe K."/>
            <person name="Nguyen-Wu E."/>
            <person name="Hashimoto A.S."/>
            <person name="Hoffmann P.R."/>
        </authorList>
    </citation>
    <scope>FUNCTION</scope>
    <scope>SUBCELLULAR LOCATION</scope>
    <scope>TISSUE SPECIFICITY</scope>
    <scope>INDUCTION</scope>
    <scope>DISRUPTION PHENOTYPE</scope>
</reference>
<reference key="7">
    <citation type="journal article" date="2013" name="J. Leukoc. Biol.">
        <title>Selenoprotein K is required for palmitoylation of CD36 in macrophages: implications in foam cell formation and atherogenesis.</title>
        <authorList>
            <person name="Meiler S."/>
            <person name="Baumer Y."/>
            <person name="Huang Z."/>
            <person name="Hoffmann F.W."/>
            <person name="Fredericks G.J."/>
            <person name="Rose A.H."/>
            <person name="Norton R.L."/>
            <person name="Hoffmann P.R."/>
            <person name="Boisvert W.A."/>
        </authorList>
    </citation>
    <scope>FUNCTION</scope>
    <scope>DISRUPTION PHENOTYPE</scope>
</reference>
<reference key="8">
    <citation type="journal article" date="2014" name="Proc. Natl. Acad. Sci. U.S.A.">
        <title>Stable expression and function of the inositol 1,4,5-triphosphate receptor requires palmitoylation by a DHHC6/selenoprotein K complex.</title>
        <authorList>
            <person name="Fredericks G.J."/>
            <person name="Hoffmann F.W."/>
            <person name="Rose A.H."/>
            <person name="Osterheld H.J."/>
            <person name="Hess F.M."/>
            <person name="Mercier F."/>
            <person name="Hoffmann P.R."/>
        </authorList>
    </citation>
    <scope>FUNCTION</scope>
    <scope>INTERACTION WITH ZDHHC6</scope>
</reference>